<reference key="1">
    <citation type="journal article" date="2002" name="Nature">
        <title>The genome sequence of Schizosaccharomyces pombe.</title>
        <authorList>
            <person name="Wood V."/>
            <person name="Gwilliam R."/>
            <person name="Rajandream M.A."/>
            <person name="Lyne M.H."/>
            <person name="Lyne R."/>
            <person name="Stewart A."/>
            <person name="Sgouros J.G."/>
            <person name="Peat N."/>
            <person name="Hayles J."/>
            <person name="Baker S.G."/>
            <person name="Basham D."/>
            <person name="Bowman S."/>
            <person name="Brooks K."/>
            <person name="Brown D."/>
            <person name="Brown S."/>
            <person name="Chillingworth T."/>
            <person name="Churcher C.M."/>
            <person name="Collins M."/>
            <person name="Connor R."/>
            <person name="Cronin A."/>
            <person name="Davis P."/>
            <person name="Feltwell T."/>
            <person name="Fraser A."/>
            <person name="Gentles S."/>
            <person name="Goble A."/>
            <person name="Hamlin N."/>
            <person name="Harris D.E."/>
            <person name="Hidalgo J."/>
            <person name="Hodgson G."/>
            <person name="Holroyd S."/>
            <person name="Hornsby T."/>
            <person name="Howarth S."/>
            <person name="Huckle E.J."/>
            <person name="Hunt S."/>
            <person name="Jagels K."/>
            <person name="James K.D."/>
            <person name="Jones L."/>
            <person name="Jones M."/>
            <person name="Leather S."/>
            <person name="McDonald S."/>
            <person name="McLean J."/>
            <person name="Mooney P."/>
            <person name="Moule S."/>
            <person name="Mungall K.L."/>
            <person name="Murphy L.D."/>
            <person name="Niblett D."/>
            <person name="Odell C."/>
            <person name="Oliver K."/>
            <person name="O'Neil S."/>
            <person name="Pearson D."/>
            <person name="Quail M.A."/>
            <person name="Rabbinowitsch E."/>
            <person name="Rutherford K.M."/>
            <person name="Rutter S."/>
            <person name="Saunders D."/>
            <person name="Seeger K."/>
            <person name="Sharp S."/>
            <person name="Skelton J."/>
            <person name="Simmonds M.N."/>
            <person name="Squares R."/>
            <person name="Squares S."/>
            <person name="Stevens K."/>
            <person name="Taylor K."/>
            <person name="Taylor R.G."/>
            <person name="Tivey A."/>
            <person name="Walsh S.V."/>
            <person name="Warren T."/>
            <person name="Whitehead S."/>
            <person name="Woodward J.R."/>
            <person name="Volckaert G."/>
            <person name="Aert R."/>
            <person name="Robben J."/>
            <person name="Grymonprez B."/>
            <person name="Weltjens I."/>
            <person name="Vanstreels E."/>
            <person name="Rieger M."/>
            <person name="Schaefer M."/>
            <person name="Mueller-Auer S."/>
            <person name="Gabel C."/>
            <person name="Fuchs M."/>
            <person name="Duesterhoeft A."/>
            <person name="Fritzc C."/>
            <person name="Holzer E."/>
            <person name="Moestl D."/>
            <person name="Hilbert H."/>
            <person name="Borzym K."/>
            <person name="Langer I."/>
            <person name="Beck A."/>
            <person name="Lehrach H."/>
            <person name="Reinhardt R."/>
            <person name="Pohl T.M."/>
            <person name="Eger P."/>
            <person name="Zimmermann W."/>
            <person name="Wedler H."/>
            <person name="Wambutt R."/>
            <person name="Purnelle B."/>
            <person name="Goffeau A."/>
            <person name="Cadieu E."/>
            <person name="Dreano S."/>
            <person name="Gloux S."/>
            <person name="Lelaure V."/>
            <person name="Mottier S."/>
            <person name="Galibert F."/>
            <person name="Aves S.J."/>
            <person name="Xiang Z."/>
            <person name="Hunt C."/>
            <person name="Moore K."/>
            <person name="Hurst S.M."/>
            <person name="Lucas M."/>
            <person name="Rochet M."/>
            <person name="Gaillardin C."/>
            <person name="Tallada V.A."/>
            <person name="Garzon A."/>
            <person name="Thode G."/>
            <person name="Daga R.R."/>
            <person name="Cruzado L."/>
            <person name="Jimenez J."/>
            <person name="Sanchez M."/>
            <person name="del Rey F."/>
            <person name="Benito J."/>
            <person name="Dominguez A."/>
            <person name="Revuelta J.L."/>
            <person name="Moreno S."/>
            <person name="Armstrong J."/>
            <person name="Forsburg S.L."/>
            <person name="Cerutti L."/>
            <person name="Lowe T."/>
            <person name="McCombie W.R."/>
            <person name="Paulsen I."/>
            <person name="Potashkin J."/>
            <person name="Shpakovski G.V."/>
            <person name="Ussery D."/>
            <person name="Barrell B.G."/>
            <person name="Nurse P."/>
        </authorList>
    </citation>
    <scope>NUCLEOTIDE SEQUENCE [LARGE SCALE GENOMIC DNA]</scope>
    <source>
        <strain>972 / ATCC 24843</strain>
    </source>
</reference>
<reference key="2">
    <citation type="journal article" date="2000" name="Genes Cells">
        <title>Large-scale screening of intracellular protein localization in living fission yeast cells by the use of a GFP-fusion genomic DNA library.</title>
        <authorList>
            <person name="Ding D.-Q."/>
            <person name="Tomita Y."/>
            <person name="Yamamoto A."/>
            <person name="Chikashige Y."/>
            <person name="Haraguchi T."/>
            <person name="Hiraoka Y."/>
        </authorList>
    </citation>
    <scope>NUCLEOTIDE SEQUENCE [LARGE SCALE GENOMIC DNA] OF 1-159</scope>
    <scope>SUBCELLULAR LOCATION</scope>
    <source>
        <strain>ATCC 38364 / 968</strain>
    </source>
</reference>
<feature type="chain" id="PRO_0000116671" description="Uncharacterized protein C23C11.06c">
    <location>
        <begin position="1"/>
        <end position="535"/>
    </location>
</feature>
<feature type="transmembrane region" description="Helical" evidence="1">
    <location>
        <begin position="55"/>
        <end position="75"/>
    </location>
</feature>
<feature type="transmembrane region" description="Helical" evidence="1">
    <location>
        <begin position="82"/>
        <end position="102"/>
    </location>
</feature>
<feature type="transmembrane region" description="Helical" evidence="1">
    <location>
        <begin position="115"/>
        <end position="135"/>
    </location>
</feature>
<feature type="transmembrane region" description="Helical" evidence="1">
    <location>
        <begin position="143"/>
        <end position="163"/>
    </location>
</feature>
<feature type="transmembrane region" description="Helical" evidence="1">
    <location>
        <begin position="201"/>
        <end position="221"/>
    </location>
</feature>
<feature type="transmembrane region" description="Helical" evidence="1">
    <location>
        <begin position="346"/>
        <end position="366"/>
    </location>
</feature>
<proteinExistence type="predicted"/>
<keyword id="KW-0472">Membrane</keyword>
<keyword id="KW-1185">Reference proteome</keyword>
<keyword id="KW-0812">Transmembrane</keyword>
<keyword id="KW-1133">Transmembrane helix</keyword>
<gene>
    <name type="ORF">SPAC23C11.06c</name>
</gene>
<organism>
    <name type="scientific">Schizosaccharomyces pombe (strain 972 / ATCC 24843)</name>
    <name type="common">Fission yeast</name>
    <dbReference type="NCBI Taxonomy" id="284812"/>
    <lineage>
        <taxon>Eukaryota</taxon>
        <taxon>Fungi</taxon>
        <taxon>Dikarya</taxon>
        <taxon>Ascomycota</taxon>
        <taxon>Taphrinomycotina</taxon>
        <taxon>Schizosaccharomycetes</taxon>
        <taxon>Schizosaccharomycetales</taxon>
        <taxon>Schizosaccharomycetaceae</taxon>
        <taxon>Schizosaccharomyces</taxon>
    </lineage>
</organism>
<sequence>MNTSQDVNAEAANERSALLPRFLGSHRGNVPENTDTYALTPLFYWIRSTSVGLLLITIICHLFLLLNIFISIPIISHLSPGFMPVGFTALAAILLAMQIMFVYSPNAPERVTQRIICFLLAIDVLVVFLSPILRHREGWRSNAFVLWAFLMSLWIVITDLMLFRQYKEEHPDYDAIAHRGYYWSWSPSTWPWRQVGSLTASTILSVILTILTIHTLVTLIMRAYDGALSAPGQLYTVTDSKARVHLECFGSSSSNNKTTVLVEGGEVSVHPFKEWLLNLQHTSPDLYEESKDFEGYENDVKPYLSPDTRVCVWDRPGMGWSDNIGSPSSVGIVMDLLTEALAQADVSGPYVLVAHGIGGVYSNVFAARHLSEVKGIVFVDAGSVQTLKDSGQFLSRFLLFVRGWLSPLGINRIFGSIFMGKTRQDRVYGMYSWTSDRWVKSKIEESLTGPSFSRYELQSAQSVLPKDLPVSVISAGKSMKRFKKWPDEQRQLSKLTQRTVWDIVNNAPHDVWLSDDGGDLIMKRLGEIIYGGWPN</sequence>
<dbReference type="EMBL" id="CU329670">
    <property type="protein sequence ID" value="CAB11159.1"/>
    <property type="molecule type" value="Genomic_DNA"/>
</dbReference>
<dbReference type="EMBL" id="AB027996">
    <property type="protein sequence ID" value="BAA87300.1"/>
    <property type="molecule type" value="Genomic_DNA"/>
</dbReference>
<dbReference type="PIR" id="T38244">
    <property type="entry name" value="T38244"/>
</dbReference>
<dbReference type="RefSeq" id="NP_593637.1">
    <property type="nucleotide sequence ID" value="NM_001019068.2"/>
</dbReference>
<dbReference type="BioGRID" id="278530">
    <property type="interactions" value="8"/>
</dbReference>
<dbReference type="FunCoup" id="O13912">
    <property type="interactions" value="149"/>
</dbReference>
<dbReference type="STRING" id="284812.O13912"/>
<dbReference type="ESTHER" id="schpo-ydw6">
    <property type="family name" value="AlphaBeta_hydrolase"/>
</dbReference>
<dbReference type="PaxDb" id="4896-SPAC23C11.06c.1"/>
<dbReference type="EnsemblFungi" id="SPAC23C11.06c.1">
    <property type="protein sequence ID" value="SPAC23C11.06c.1:pep"/>
    <property type="gene ID" value="SPAC23C11.06c"/>
</dbReference>
<dbReference type="KEGG" id="spo:2542051"/>
<dbReference type="PomBase" id="SPAC23C11.06c"/>
<dbReference type="VEuPathDB" id="FungiDB:SPAC23C11.06c"/>
<dbReference type="eggNOG" id="ENOG502QQW9">
    <property type="taxonomic scope" value="Eukaryota"/>
</dbReference>
<dbReference type="HOGENOM" id="CLU_028296_1_0_1"/>
<dbReference type="InParanoid" id="O13912"/>
<dbReference type="OMA" id="ISRYCYW"/>
<dbReference type="PhylomeDB" id="O13912"/>
<dbReference type="PRO" id="PR:O13912"/>
<dbReference type="Proteomes" id="UP000002485">
    <property type="component" value="Chromosome I"/>
</dbReference>
<dbReference type="GO" id="GO:0005737">
    <property type="term" value="C:cytoplasm"/>
    <property type="evidence" value="ECO:0007005"/>
    <property type="project" value="PomBase"/>
</dbReference>
<dbReference type="GO" id="GO:0000329">
    <property type="term" value="C:fungal-type vacuole membrane"/>
    <property type="evidence" value="ECO:0000266"/>
    <property type="project" value="PomBase"/>
</dbReference>
<dbReference type="GO" id="GO:0016787">
    <property type="term" value="F:hydrolase activity"/>
    <property type="evidence" value="ECO:0000255"/>
    <property type="project" value="PomBase"/>
</dbReference>
<dbReference type="FunFam" id="3.40.50.1820:FF:000322">
    <property type="entry name" value="Integral membrane protein"/>
    <property type="match status" value="1"/>
</dbReference>
<dbReference type="Gene3D" id="3.40.50.1820">
    <property type="entry name" value="alpha/beta hydrolase"/>
    <property type="match status" value="1"/>
</dbReference>
<dbReference type="InterPro" id="IPR000073">
    <property type="entry name" value="AB_hydrolase_1"/>
</dbReference>
<dbReference type="InterPro" id="IPR029058">
    <property type="entry name" value="AB_hydrolase_fold"/>
</dbReference>
<dbReference type="InterPro" id="IPR019431">
    <property type="entry name" value="DUF2417"/>
</dbReference>
<dbReference type="Pfam" id="PF12697">
    <property type="entry name" value="Abhydrolase_6"/>
    <property type="match status" value="1"/>
</dbReference>
<dbReference type="Pfam" id="PF10329">
    <property type="entry name" value="DUF2417"/>
    <property type="match status" value="1"/>
</dbReference>
<dbReference type="SUPFAM" id="SSF53474">
    <property type="entry name" value="alpha/beta-Hydrolases"/>
    <property type="match status" value="1"/>
</dbReference>
<protein>
    <recommendedName>
        <fullName>Uncharacterized protein C23C11.06c</fullName>
    </recommendedName>
</protein>
<evidence type="ECO:0000255" key="1"/>
<evidence type="ECO:0000269" key="2">
    <source>
    </source>
</evidence>
<accession>O13912</accession>
<accession>Q9US75</accession>
<comment type="subcellular location">
    <subcellularLocation>
        <location evidence="2">Membrane</location>
        <topology evidence="2">Multi-pass membrane protein</topology>
    </subcellularLocation>
</comment>
<name>YDW6_SCHPO</name>